<sequence length="395" mass="42768">MAKHLFTSESVTEGHPDKVADQISDAILDSILSKDPLARVACETLVTTGLVLISGEITCKCYVDIPNIVRETVRDIGYTRAKYGFDCDTCAVLTSIDEQSPDIAMGVDEALEAREGLDDLFSRVGAGDQGIMVGYATDETPTLMPMPIYLAHRLARRLASVRKNGTLPYLRPDGKTQVTVQYDNGRPVKVDTVVISAQHHPAVDLGTIRADLIEKVVEPIIPVGLITNSTRYLINPTGRFVIGGPQADTGLTGRKIVVDTYGGMARHGGGAFSGKDPTKVDRSASYAARYVAKNIVAAGLASRCEVHVAYAIGVAKPVALRVDTFGTGLINEERLEKLVLEHFDLRPAAIIHHLDLRRPIYRQVAAYGHFGRGDLNLPWERIDKAEELRAAGTGG</sequence>
<dbReference type="EC" id="2.5.1.6" evidence="1"/>
<dbReference type="EMBL" id="CP000860">
    <property type="protein sequence ID" value="ACA60573.1"/>
    <property type="molecule type" value="Genomic_DNA"/>
</dbReference>
<dbReference type="RefSeq" id="WP_012303148.1">
    <property type="nucleotide sequence ID" value="NC_010424.1"/>
</dbReference>
<dbReference type="SMR" id="B1I6C4"/>
<dbReference type="STRING" id="477974.Daud_2084"/>
<dbReference type="KEGG" id="dau:Daud_2084"/>
<dbReference type="eggNOG" id="COG0192">
    <property type="taxonomic scope" value="Bacteria"/>
</dbReference>
<dbReference type="HOGENOM" id="CLU_041802_1_1_9"/>
<dbReference type="OrthoDB" id="9801686at2"/>
<dbReference type="UniPathway" id="UPA00315">
    <property type="reaction ID" value="UER00080"/>
</dbReference>
<dbReference type="Proteomes" id="UP000008544">
    <property type="component" value="Chromosome"/>
</dbReference>
<dbReference type="GO" id="GO:0005737">
    <property type="term" value="C:cytoplasm"/>
    <property type="evidence" value="ECO:0007669"/>
    <property type="project" value="UniProtKB-SubCell"/>
</dbReference>
<dbReference type="GO" id="GO:0005524">
    <property type="term" value="F:ATP binding"/>
    <property type="evidence" value="ECO:0007669"/>
    <property type="project" value="UniProtKB-UniRule"/>
</dbReference>
<dbReference type="GO" id="GO:0000287">
    <property type="term" value="F:magnesium ion binding"/>
    <property type="evidence" value="ECO:0007669"/>
    <property type="project" value="UniProtKB-UniRule"/>
</dbReference>
<dbReference type="GO" id="GO:0004478">
    <property type="term" value="F:methionine adenosyltransferase activity"/>
    <property type="evidence" value="ECO:0007669"/>
    <property type="project" value="UniProtKB-UniRule"/>
</dbReference>
<dbReference type="GO" id="GO:0006730">
    <property type="term" value="P:one-carbon metabolic process"/>
    <property type="evidence" value="ECO:0007669"/>
    <property type="project" value="UniProtKB-KW"/>
</dbReference>
<dbReference type="GO" id="GO:0006556">
    <property type="term" value="P:S-adenosylmethionine biosynthetic process"/>
    <property type="evidence" value="ECO:0007669"/>
    <property type="project" value="UniProtKB-UniRule"/>
</dbReference>
<dbReference type="CDD" id="cd18079">
    <property type="entry name" value="S-AdoMet_synt"/>
    <property type="match status" value="1"/>
</dbReference>
<dbReference type="FunFam" id="3.30.300.10:FF:000003">
    <property type="entry name" value="S-adenosylmethionine synthase"/>
    <property type="match status" value="1"/>
</dbReference>
<dbReference type="Gene3D" id="3.30.300.10">
    <property type="match status" value="3"/>
</dbReference>
<dbReference type="HAMAP" id="MF_00086">
    <property type="entry name" value="S_AdoMet_synth1"/>
    <property type="match status" value="1"/>
</dbReference>
<dbReference type="InterPro" id="IPR022631">
    <property type="entry name" value="ADOMET_SYNTHASE_CS"/>
</dbReference>
<dbReference type="InterPro" id="IPR022630">
    <property type="entry name" value="S-AdoMet_synt_C"/>
</dbReference>
<dbReference type="InterPro" id="IPR022629">
    <property type="entry name" value="S-AdoMet_synt_central"/>
</dbReference>
<dbReference type="InterPro" id="IPR022628">
    <property type="entry name" value="S-AdoMet_synt_N"/>
</dbReference>
<dbReference type="InterPro" id="IPR002133">
    <property type="entry name" value="S-AdoMet_synthetase"/>
</dbReference>
<dbReference type="InterPro" id="IPR022636">
    <property type="entry name" value="S-AdoMet_synthetase_sfam"/>
</dbReference>
<dbReference type="NCBIfam" id="TIGR01034">
    <property type="entry name" value="metK"/>
    <property type="match status" value="1"/>
</dbReference>
<dbReference type="PANTHER" id="PTHR11964">
    <property type="entry name" value="S-ADENOSYLMETHIONINE SYNTHETASE"/>
    <property type="match status" value="1"/>
</dbReference>
<dbReference type="Pfam" id="PF02773">
    <property type="entry name" value="S-AdoMet_synt_C"/>
    <property type="match status" value="1"/>
</dbReference>
<dbReference type="Pfam" id="PF02772">
    <property type="entry name" value="S-AdoMet_synt_M"/>
    <property type="match status" value="1"/>
</dbReference>
<dbReference type="Pfam" id="PF00438">
    <property type="entry name" value="S-AdoMet_synt_N"/>
    <property type="match status" value="1"/>
</dbReference>
<dbReference type="PIRSF" id="PIRSF000497">
    <property type="entry name" value="MAT"/>
    <property type="match status" value="1"/>
</dbReference>
<dbReference type="SUPFAM" id="SSF55973">
    <property type="entry name" value="S-adenosylmethionine synthetase"/>
    <property type="match status" value="3"/>
</dbReference>
<dbReference type="PROSITE" id="PS00376">
    <property type="entry name" value="ADOMET_SYNTHASE_1"/>
    <property type="match status" value="1"/>
</dbReference>
<dbReference type="PROSITE" id="PS00377">
    <property type="entry name" value="ADOMET_SYNTHASE_2"/>
    <property type="match status" value="1"/>
</dbReference>
<gene>
    <name evidence="1" type="primary">metK</name>
    <name type="ordered locus">Daud_2084</name>
</gene>
<name>METK_DESAP</name>
<proteinExistence type="inferred from homology"/>
<feature type="chain" id="PRO_1000093045" description="S-adenosylmethionine synthase">
    <location>
        <begin position="1"/>
        <end position="395"/>
    </location>
</feature>
<feature type="region of interest" description="Flexible loop" evidence="1">
    <location>
        <begin position="99"/>
        <end position="109"/>
    </location>
</feature>
<feature type="binding site" description="in other chain" evidence="1">
    <location>
        <position position="15"/>
    </location>
    <ligand>
        <name>ATP</name>
        <dbReference type="ChEBI" id="CHEBI:30616"/>
        <note>ligand shared between two neighboring subunits</note>
    </ligand>
</feature>
<feature type="binding site" evidence="1">
    <location>
        <position position="17"/>
    </location>
    <ligand>
        <name>Mg(2+)</name>
        <dbReference type="ChEBI" id="CHEBI:18420"/>
    </ligand>
</feature>
<feature type="binding site" evidence="1">
    <location>
        <position position="43"/>
    </location>
    <ligand>
        <name>K(+)</name>
        <dbReference type="ChEBI" id="CHEBI:29103"/>
    </ligand>
</feature>
<feature type="binding site" description="in other chain" evidence="1">
    <location>
        <position position="56"/>
    </location>
    <ligand>
        <name>L-methionine</name>
        <dbReference type="ChEBI" id="CHEBI:57844"/>
        <note>ligand shared between two neighboring subunits</note>
    </ligand>
</feature>
<feature type="binding site" description="in other chain" evidence="1">
    <location>
        <position position="99"/>
    </location>
    <ligand>
        <name>L-methionine</name>
        <dbReference type="ChEBI" id="CHEBI:57844"/>
        <note>ligand shared between two neighboring subunits</note>
    </ligand>
</feature>
<feature type="binding site" description="in other chain" evidence="1">
    <location>
        <begin position="173"/>
        <end position="175"/>
    </location>
    <ligand>
        <name>ATP</name>
        <dbReference type="ChEBI" id="CHEBI:30616"/>
        <note>ligand shared between two neighboring subunits</note>
    </ligand>
</feature>
<feature type="binding site" description="in other chain" evidence="1">
    <location>
        <begin position="239"/>
        <end position="240"/>
    </location>
    <ligand>
        <name>ATP</name>
        <dbReference type="ChEBI" id="CHEBI:30616"/>
        <note>ligand shared between two neighboring subunits</note>
    </ligand>
</feature>
<feature type="binding site" evidence="1">
    <location>
        <position position="248"/>
    </location>
    <ligand>
        <name>ATP</name>
        <dbReference type="ChEBI" id="CHEBI:30616"/>
        <note>ligand shared between two neighboring subunits</note>
    </ligand>
</feature>
<feature type="binding site" evidence="1">
    <location>
        <position position="248"/>
    </location>
    <ligand>
        <name>L-methionine</name>
        <dbReference type="ChEBI" id="CHEBI:57844"/>
        <note>ligand shared between two neighboring subunits</note>
    </ligand>
</feature>
<feature type="binding site" description="in other chain" evidence="1">
    <location>
        <begin position="254"/>
        <end position="255"/>
    </location>
    <ligand>
        <name>ATP</name>
        <dbReference type="ChEBI" id="CHEBI:30616"/>
        <note>ligand shared between two neighboring subunits</note>
    </ligand>
</feature>
<feature type="binding site" evidence="1">
    <location>
        <position position="271"/>
    </location>
    <ligand>
        <name>ATP</name>
        <dbReference type="ChEBI" id="CHEBI:30616"/>
        <note>ligand shared between two neighboring subunits</note>
    </ligand>
</feature>
<feature type="binding site" evidence="1">
    <location>
        <position position="275"/>
    </location>
    <ligand>
        <name>ATP</name>
        <dbReference type="ChEBI" id="CHEBI:30616"/>
        <note>ligand shared between two neighboring subunits</note>
    </ligand>
</feature>
<feature type="binding site" description="in other chain" evidence="1">
    <location>
        <position position="279"/>
    </location>
    <ligand>
        <name>L-methionine</name>
        <dbReference type="ChEBI" id="CHEBI:57844"/>
        <note>ligand shared between two neighboring subunits</note>
    </ligand>
</feature>
<keyword id="KW-0067">ATP-binding</keyword>
<keyword id="KW-0963">Cytoplasm</keyword>
<keyword id="KW-0460">Magnesium</keyword>
<keyword id="KW-0479">Metal-binding</keyword>
<keyword id="KW-0547">Nucleotide-binding</keyword>
<keyword id="KW-0554">One-carbon metabolism</keyword>
<keyword id="KW-0630">Potassium</keyword>
<keyword id="KW-1185">Reference proteome</keyword>
<keyword id="KW-0808">Transferase</keyword>
<protein>
    <recommendedName>
        <fullName evidence="1">S-adenosylmethionine synthase</fullName>
        <shortName evidence="1">AdoMet synthase</shortName>
        <ecNumber evidence="1">2.5.1.6</ecNumber>
    </recommendedName>
    <alternativeName>
        <fullName evidence="1">MAT</fullName>
    </alternativeName>
    <alternativeName>
        <fullName evidence="1">Methionine adenosyltransferase</fullName>
    </alternativeName>
</protein>
<comment type="function">
    <text evidence="1">Catalyzes the formation of S-adenosylmethionine (AdoMet) from methionine and ATP. The overall synthetic reaction is composed of two sequential steps, AdoMet formation and the subsequent tripolyphosphate hydrolysis which occurs prior to release of AdoMet from the enzyme.</text>
</comment>
<comment type="catalytic activity">
    <reaction evidence="1">
        <text>L-methionine + ATP + H2O = S-adenosyl-L-methionine + phosphate + diphosphate</text>
        <dbReference type="Rhea" id="RHEA:21080"/>
        <dbReference type="ChEBI" id="CHEBI:15377"/>
        <dbReference type="ChEBI" id="CHEBI:30616"/>
        <dbReference type="ChEBI" id="CHEBI:33019"/>
        <dbReference type="ChEBI" id="CHEBI:43474"/>
        <dbReference type="ChEBI" id="CHEBI:57844"/>
        <dbReference type="ChEBI" id="CHEBI:59789"/>
        <dbReference type="EC" id="2.5.1.6"/>
    </reaction>
</comment>
<comment type="cofactor">
    <cofactor evidence="1">
        <name>Mg(2+)</name>
        <dbReference type="ChEBI" id="CHEBI:18420"/>
    </cofactor>
    <text evidence="1">Binds 2 divalent ions per subunit.</text>
</comment>
<comment type="cofactor">
    <cofactor evidence="1">
        <name>K(+)</name>
        <dbReference type="ChEBI" id="CHEBI:29103"/>
    </cofactor>
    <text evidence="1">Binds 1 potassium ion per subunit.</text>
</comment>
<comment type="pathway">
    <text evidence="1">Amino-acid biosynthesis; S-adenosyl-L-methionine biosynthesis; S-adenosyl-L-methionine from L-methionine: step 1/1.</text>
</comment>
<comment type="subunit">
    <text evidence="1">Homotetramer; dimer of dimers.</text>
</comment>
<comment type="subcellular location">
    <subcellularLocation>
        <location evidence="1">Cytoplasm</location>
    </subcellularLocation>
</comment>
<comment type="similarity">
    <text evidence="1">Belongs to the AdoMet synthase family.</text>
</comment>
<accession>B1I6C4</accession>
<reference key="1">
    <citation type="submission" date="2007-10" db="EMBL/GenBank/DDBJ databases">
        <title>Complete sequence of chromosome of Desulforudis audaxviator MP104C.</title>
        <authorList>
            <person name="Copeland A."/>
            <person name="Lucas S."/>
            <person name="Lapidus A."/>
            <person name="Barry K."/>
            <person name="Glavina del Rio T."/>
            <person name="Dalin E."/>
            <person name="Tice H."/>
            <person name="Bruce D."/>
            <person name="Pitluck S."/>
            <person name="Lowry S.R."/>
            <person name="Larimer F."/>
            <person name="Land M.L."/>
            <person name="Hauser L."/>
            <person name="Kyrpides N."/>
            <person name="Ivanova N.N."/>
            <person name="Richardson P."/>
        </authorList>
    </citation>
    <scope>NUCLEOTIDE SEQUENCE [LARGE SCALE GENOMIC DNA]</scope>
    <source>
        <strain>MP104C</strain>
    </source>
</reference>
<evidence type="ECO:0000255" key="1">
    <source>
        <dbReference type="HAMAP-Rule" id="MF_00086"/>
    </source>
</evidence>
<organism>
    <name type="scientific">Desulforudis audaxviator (strain MP104C)</name>
    <dbReference type="NCBI Taxonomy" id="477974"/>
    <lineage>
        <taxon>Bacteria</taxon>
        <taxon>Bacillati</taxon>
        <taxon>Bacillota</taxon>
        <taxon>Clostridia</taxon>
        <taxon>Thermoanaerobacterales</taxon>
        <taxon>Candidatus Desulforudaceae</taxon>
        <taxon>Candidatus Desulforudis</taxon>
    </lineage>
</organism>